<evidence type="ECO:0000255" key="1">
    <source>
        <dbReference type="HAMAP-Rule" id="MF_00093"/>
    </source>
</evidence>
<feature type="chain" id="PRO_0000263263" description="Peptide chain release factor 1">
    <location>
        <begin position="1"/>
        <end position="360"/>
    </location>
</feature>
<feature type="modified residue" description="N5-methylglutamine" evidence="1">
    <location>
        <position position="235"/>
    </location>
</feature>
<keyword id="KW-0963">Cytoplasm</keyword>
<keyword id="KW-0488">Methylation</keyword>
<keyword id="KW-0648">Protein biosynthesis</keyword>
<proteinExistence type="inferred from homology"/>
<protein>
    <recommendedName>
        <fullName evidence="1">Peptide chain release factor 1</fullName>
        <shortName evidence="1">RF-1</shortName>
    </recommendedName>
</protein>
<sequence length="360" mass="40029">MKSSIRQKLELLVDRLDEIDRMLSAPSTASDMDQFRKLSRERAEVEPVVVQFNAFRQAENDLAEAEAMLSDPDMREFAEEEMAAAKARLPELELELQKLLLPKDPNDERSVLLEIRAGTGGDESALFAGSLFRMYSRFAERQRWQVEVMSASESELGGYREIICRIAGNGAYSRLKFESGGHRVQRVPETETQGRIHTSACTVAVMPEVDEVEDVNLNPADLRIDTFRASGAGGQHINKTDSAVRITHLPTGIVAECQDGRSQHANKASALKVLAARIKDVQVRAQQAHISSTRKSLIGSGDRSERIRTYNFPQGRITDHRINLTLYKIAAIMDGDMDELLGALAAEHQADLLAELAEQN</sequence>
<gene>
    <name evidence="1" type="primary">prfA</name>
    <name type="ordered locus">Daro_3687</name>
</gene>
<name>RF1_DECAR</name>
<reference key="1">
    <citation type="journal article" date="2009" name="BMC Genomics">
        <title>Metabolic analysis of the soil microbe Dechloromonas aromatica str. RCB: indications of a surprisingly complex life-style and cryptic anaerobic pathways for aromatic degradation.</title>
        <authorList>
            <person name="Salinero K.K."/>
            <person name="Keller K."/>
            <person name="Feil W.S."/>
            <person name="Feil H."/>
            <person name="Trong S."/>
            <person name="Di Bartolo G."/>
            <person name="Lapidus A."/>
        </authorList>
    </citation>
    <scope>NUCLEOTIDE SEQUENCE [LARGE SCALE GENOMIC DNA]</scope>
    <source>
        <strain>RCB</strain>
    </source>
</reference>
<organism>
    <name type="scientific">Dechloromonas aromatica (strain RCB)</name>
    <dbReference type="NCBI Taxonomy" id="159087"/>
    <lineage>
        <taxon>Bacteria</taxon>
        <taxon>Pseudomonadati</taxon>
        <taxon>Pseudomonadota</taxon>
        <taxon>Betaproteobacteria</taxon>
        <taxon>Rhodocyclales</taxon>
        <taxon>Azonexaceae</taxon>
        <taxon>Dechloromonas</taxon>
    </lineage>
</organism>
<comment type="function">
    <text evidence="1">Peptide chain release factor 1 directs the termination of translation in response to the peptide chain termination codons UAG and UAA.</text>
</comment>
<comment type="subcellular location">
    <subcellularLocation>
        <location evidence="1">Cytoplasm</location>
    </subcellularLocation>
</comment>
<comment type="PTM">
    <text evidence="1">Methylated by PrmC. Methylation increases the termination efficiency of RF1.</text>
</comment>
<comment type="similarity">
    <text evidence="1">Belongs to the prokaryotic/mitochondrial release factor family.</text>
</comment>
<accession>Q479R5</accession>
<dbReference type="EMBL" id="CP000089">
    <property type="protein sequence ID" value="AAZ48416.1"/>
    <property type="molecule type" value="Genomic_DNA"/>
</dbReference>
<dbReference type="SMR" id="Q479R5"/>
<dbReference type="STRING" id="159087.Daro_3687"/>
<dbReference type="KEGG" id="dar:Daro_3687"/>
<dbReference type="eggNOG" id="COG0216">
    <property type="taxonomic scope" value="Bacteria"/>
</dbReference>
<dbReference type="HOGENOM" id="CLU_036856_0_1_4"/>
<dbReference type="OrthoDB" id="9806673at2"/>
<dbReference type="GO" id="GO:0005737">
    <property type="term" value="C:cytoplasm"/>
    <property type="evidence" value="ECO:0007669"/>
    <property type="project" value="UniProtKB-SubCell"/>
</dbReference>
<dbReference type="GO" id="GO:0016149">
    <property type="term" value="F:translation release factor activity, codon specific"/>
    <property type="evidence" value="ECO:0007669"/>
    <property type="project" value="UniProtKB-UniRule"/>
</dbReference>
<dbReference type="FunFam" id="3.30.160.20:FF:000004">
    <property type="entry name" value="Peptide chain release factor 1"/>
    <property type="match status" value="1"/>
</dbReference>
<dbReference type="FunFam" id="3.30.70.1660:FF:000002">
    <property type="entry name" value="Peptide chain release factor 1"/>
    <property type="match status" value="1"/>
</dbReference>
<dbReference type="FunFam" id="3.30.70.1660:FF:000004">
    <property type="entry name" value="Peptide chain release factor 1"/>
    <property type="match status" value="1"/>
</dbReference>
<dbReference type="Gene3D" id="3.30.160.20">
    <property type="match status" value="1"/>
</dbReference>
<dbReference type="Gene3D" id="3.30.70.1660">
    <property type="match status" value="1"/>
</dbReference>
<dbReference type="Gene3D" id="6.10.140.1950">
    <property type="match status" value="1"/>
</dbReference>
<dbReference type="HAMAP" id="MF_00093">
    <property type="entry name" value="Rel_fac_1"/>
    <property type="match status" value="1"/>
</dbReference>
<dbReference type="InterPro" id="IPR005139">
    <property type="entry name" value="PCRF"/>
</dbReference>
<dbReference type="InterPro" id="IPR000352">
    <property type="entry name" value="Pep_chain_release_fac_I"/>
</dbReference>
<dbReference type="InterPro" id="IPR045853">
    <property type="entry name" value="Pep_chain_release_fac_I_sf"/>
</dbReference>
<dbReference type="InterPro" id="IPR050057">
    <property type="entry name" value="Prokaryotic/Mito_RF"/>
</dbReference>
<dbReference type="InterPro" id="IPR004373">
    <property type="entry name" value="RF-1"/>
</dbReference>
<dbReference type="NCBIfam" id="TIGR00019">
    <property type="entry name" value="prfA"/>
    <property type="match status" value="1"/>
</dbReference>
<dbReference type="NCBIfam" id="NF001859">
    <property type="entry name" value="PRK00591.1"/>
    <property type="match status" value="1"/>
</dbReference>
<dbReference type="PANTHER" id="PTHR43804">
    <property type="entry name" value="LD18447P"/>
    <property type="match status" value="1"/>
</dbReference>
<dbReference type="PANTHER" id="PTHR43804:SF7">
    <property type="entry name" value="LD18447P"/>
    <property type="match status" value="1"/>
</dbReference>
<dbReference type="Pfam" id="PF03462">
    <property type="entry name" value="PCRF"/>
    <property type="match status" value="1"/>
</dbReference>
<dbReference type="Pfam" id="PF00472">
    <property type="entry name" value="RF-1"/>
    <property type="match status" value="1"/>
</dbReference>
<dbReference type="SMART" id="SM00937">
    <property type="entry name" value="PCRF"/>
    <property type="match status" value="1"/>
</dbReference>
<dbReference type="SUPFAM" id="SSF75620">
    <property type="entry name" value="Release factor"/>
    <property type="match status" value="1"/>
</dbReference>
<dbReference type="PROSITE" id="PS00745">
    <property type="entry name" value="RF_PROK_I"/>
    <property type="match status" value="1"/>
</dbReference>